<reference key="1">
    <citation type="journal article" date="2001" name="Nucleic Acids Res.">
        <title>Comparative analysis of the gene-dense ACHE/TFR2 region on human chromosome 7q22 with the orthologous region on mouse chromosome 5.</title>
        <authorList>
            <person name="Wilson M.D."/>
            <person name="Riemer C."/>
            <person name="Martindale D.W."/>
            <person name="Schnupf P."/>
            <person name="Boright A.P."/>
            <person name="Cheung T.L."/>
            <person name="Hardy D.M."/>
            <person name="Schwartz S."/>
            <person name="Scherer S.W."/>
            <person name="Tsui L.-C."/>
            <person name="Miller W."/>
            <person name="Koop B.F."/>
        </authorList>
    </citation>
    <scope>NUCLEOTIDE SEQUENCE [GENOMIC DNA]</scope>
    <source>
        <strain>129/Sv</strain>
    </source>
</reference>
<reference key="2">
    <citation type="journal article" date="2005" name="Science">
        <title>The transcriptional landscape of the mammalian genome.</title>
        <authorList>
            <person name="Carninci P."/>
            <person name="Kasukawa T."/>
            <person name="Katayama S."/>
            <person name="Gough J."/>
            <person name="Frith M.C."/>
            <person name="Maeda N."/>
            <person name="Oyama R."/>
            <person name="Ravasi T."/>
            <person name="Lenhard B."/>
            <person name="Wells C."/>
            <person name="Kodzius R."/>
            <person name="Shimokawa K."/>
            <person name="Bajic V.B."/>
            <person name="Brenner S.E."/>
            <person name="Batalov S."/>
            <person name="Forrest A.R."/>
            <person name="Zavolan M."/>
            <person name="Davis M.J."/>
            <person name="Wilming L.G."/>
            <person name="Aidinis V."/>
            <person name="Allen J.E."/>
            <person name="Ambesi-Impiombato A."/>
            <person name="Apweiler R."/>
            <person name="Aturaliya R.N."/>
            <person name="Bailey T.L."/>
            <person name="Bansal M."/>
            <person name="Baxter L."/>
            <person name="Beisel K.W."/>
            <person name="Bersano T."/>
            <person name="Bono H."/>
            <person name="Chalk A.M."/>
            <person name="Chiu K.P."/>
            <person name="Choudhary V."/>
            <person name="Christoffels A."/>
            <person name="Clutterbuck D.R."/>
            <person name="Crowe M.L."/>
            <person name="Dalla E."/>
            <person name="Dalrymple B.P."/>
            <person name="de Bono B."/>
            <person name="Della Gatta G."/>
            <person name="di Bernardo D."/>
            <person name="Down T."/>
            <person name="Engstrom P."/>
            <person name="Fagiolini M."/>
            <person name="Faulkner G."/>
            <person name="Fletcher C.F."/>
            <person name="Fukushima T."/>
            <person name="Furuno M."/>
            <person name="Futaki S."/>
            <person name="Gariboldi M."/>
            <person name="Georgii-Hemming P."/>
            <person name="Gingeras T.R."/>
            <person name="Gojobori T."/>
            <person name="Green R.E."/>
            <person name="Gustincich S."/>
            <person name="Harbers M."/>
            <person name="Hayashi Y."/>
            <person name="Hensch T.K."/>
            <person name="Hirokawa N."/>
            <person name="Hill D."/>
            <person name="Huminiecki L."/>
            <person name="Iacono M."/>
            <person name="Ikeo K."/>
            <person name="Iwama A."/>
            <person name="Ishikawa T."/>
            <person name="Jakt M."/>
            <person name="Kanapin A."/>
            <person name="Katoh M."/>
            <person name="Kawasawa Y."/>
            <person name="Kelso J."/>
            <person name="Kitamura H."/>
            <person name="Kitano H."/>
            <person name="Kollias G."/>
            <person name="Krishnan S.P."/>
            <person name="Kruger A."/>
            <person name="Kummerfeld S.K."/>
            <person name="Kurochkin I.V."/>
            <person name="Lareau L.F."/>
            <person name="Lazarevic D."/>
            <person name="Lipovich L."/>
            <person name="Liu J."/>
            <person name="Liuni S."/>
            <person name="McWilliam S."/>
            <person name="Madan Babu M."/>
            <person name="Madera M."/>
            <person name="Marchionni L."/>
            <person name="Matsuda H."/>
            <person name="Matsuzawa S."/>
            <person name="Miki H."/>
            <person name="Mignone F."/>
            <person name="Miyake S."/>
            <person name="Morris K."/>
            <person name="Mottagui-Tabar S."/>
            <person name="Mulder N."/>
            <person name="Nakano N."/>
            <person name="Nakauchi H."/>
            <person name="Ng P."/>
            <person name="Nilsson R."/>
            <person name="Nishiguchi S."/>
            <person name="Nishikawa S."/>
            <person name="Nori F."/>
            <person name="Ohara O."/>
            <person name="Okazaki Y."/>
            <person name="Orlando V."/>
            <person name="Pang K.C."/>
            <person name="Pavan W.J."/>
            <person name="Pavesi G."/>
            <person name="Pesole G."/>
            <person name="Petrovsky N."/>
            <person name="Piazza S."/>
            <person name="Reed J."/>
            <person name="Reid J.F."/>
            <person name="Ring B.Z."/>
            <person name="Ringwald M."/>
            <person name="Rost B."/>
            <person name="Ruan Y."/>
            <person name="Salzberg S.L."/>
            <person name="Sandelin A."/>
            <person name="Schneider C."/>
            <person name="Schoenbach C."/>
            <person name="Sekiguchi K."/>
            <person name="Semple C.A."/>
            <person name="Seno S."/>
            <person name="Sessa L."/>
            <person name="Sheng Y."/>
            <person name="Shibata Y."/>
            <person name="Shimada H."/>
            <person name="Shimada K."/>
            <person name="Silva D."/>
            <person name="Sinclair B."/>
            <person name="Sperling S."/>
            <person name="Stupka E."/>
            <person name="Sugiura K."/>
            <person name="Sultana R."/>
            <person name="Takenaka Y."/>
            <person name="Taki K."/>
            <person name="Tammoja K."/>
            <person name="Tan S.L."/>
            <person name="Tang S."/>
            <person name="Taylor M.S."/>
            <person name="Tegner J."/>
            <person name="Teichmann S.A."/>
            <person name="Ueda H.R."/>
            <person name="van Nimwegen E."/>
            <person name="Verardo R."/>
            <person name="Wei C.L."/>
            <person name="Yagi K."/>
            <person name="Yamanishi H."/>
            <person name="Zabarovsky E."/>
            <person name="Zhu S."/>
            <person name="Zimmer A."/>
            <person name="Hide W."/>
            <person name="Bult C."/>
            <person name="Grimmond S.M."/>
            <person name="Teasdale R.D."/>
            <person name="Liu E.T."/>
            <person name="Brusic V."/>
            <person name="Quackenbush J."/>
            <person name="Wahlestedt C."/>
            <person name="Mattick J.S."/>
            <person name="Hume D.A."/>
            <person name="Kai C."/>
            <person name="Sasaki D."/>
            <person name="Tomaru Y."/>
            <person name="Fukuda S."/>
            <person name="Kanamori-Katayama M."/>
            <person name="Suzuki M."/>
            <person name="Aoki J."/>
            <person name="Arakawa T."/>
            <person name="Iida J."/>
            <person name="Imamura K."/>
            <person name="Itoh M."/>
            <person name="Kato T."/>
            <person name="Kawaji H."/>
            <person name="Kawagashira N."/>
            <person name="Kawashima T."/>
            <person name="Kojima M."/>
            <person name="Kondo S."/>
            <person name="Konno H."/>
            <person name="Nakano K."/>
            <person name="Ninomiya N."/>
            <person name="Nishio T."/>
            <person name="Okada M."/>
            <person name="Plessy C."/>
            <person name="Shibata K."/>
            <person name="Shiraki T."/>
            <person name="Suzuki S."/>
            <person name="Tagami M."/>
            <person name="Waki K."/>
            <person name="Watahiki A."/>
            <person name="Okamura-Oho Y."/>
            <person name="Suzuki H."/>
            <person name="Kawai J."/>
            <person name="Hayashizaki Y."/>
        </authorList>
    </citation>
    <scope>NUCLEOTIDE SEQUENCE [LARGE SCALE MRNA]</scope>
    <source>
        <strain>C57BL/6J</strain>
    </source>
</reference>
<reference key="3">
    <citation type="journal article" date="2004" name="Genome Res.">
        <title>The status, quality, and expansion of the NIH full-length cDNA project: the Mammalian Gene Collection (MGC).</title>
        <authorList>
            <consortium name="The MGC Project Team"/>
        </authorList>
    </citation>
    <scope>NUCLEOTIDE SEQUENCE [LARGE SCALE MRNA]</scope>
    <source>
        <tissue>Heart</tissue>
        <tissue>Mammary tumor</tissue>
    </source>
</reference>
<reference key="4">
    <citation type="journal article" date="2007" name="J. Biol. Chem.">
        <title>Two novel ubiquitin-fold modifier 1 (Ufm1)-specific Proteases, UfSP1 and UfSP2.</title>
        <authorList>
            <person name="Kang S.H."/>
            <person name="Kim G.R."/>
            <person name="Seong M."/>
            <person name="Baek S.H."/>
            <person name="Seol J.H."/>
            <person name="Bang O.S."/>
            <person name="Ovaa H."/>
            <person name="Tatsumi K."/>
            <person name="Komatsu M."/>
            <person name="Tanaka K."/>
            <person name="Chung C.H."/>
        </authorList>
    </citation>
    <scope>IDENTIFICATION BY MASS SPECTROMETRY</scope>
    <scope>FUNCTION</scope>
    <scope>TISSUE SPECIFICITY</scope>
    <scope>MUTAGENESIS OF CYS-53</scope>
</reference>
<reference key="5">
    <citation type="journal article" date="2010" name="Cell">
        <title>A tissue-specific atlas of mouse protein phosphorylation and expression.</title>
        <authorList>
            <person name="Huttlin E.L."/>
            <person name="Jedrychowski M.P."/>
            <person name="Elias J.E."/>
            <person name="Goswami T."/>
            <person name="Rad R."/>
            <person name="Beausoleil S.A."/>
            <person name="Villen J."/>
            <person name="Haas W."/>
            <person name="Sowa M.E."/>
            <person name="Gygi S.P."/>
        </authorList>
    </citation>
    <scope>IDENTIFICATION BY MASS SPECTROMETRY [LARGE SCALE ANALYSIS]</scope>
    <source>
        <tissue>Brain</tissue>
        <tissue>Testis</tissue>
    </source>
</reference>
<reference key="6">
    <citation type="journal article" date="2008" name="J. Biol. Chem.">
        <title>Structural basis for Ufm1 processing by UfSP1.</title>
        <authorList>
            <person name="Ha B.H."/>
            <person name="Ahn H.C."/>
            <person name="Kang S.H."/>
            <person name="Tanaka K."/>
            <person name="Chung C.H."/>
            <person name="Kim E.E."/>
        </authorList>
    </citation>
    <scope>X-RAY CRYSTALLOGRAPHY (1.7 ANGSTROMS) OF 6-215</scope>
    <scope>FUNCTION</scope>
    <scope>ACTIVE SITES</scope>
    <scope>MUTAGENESIS OF TYR-41; CYS-53; TRP-98; GLN-154; ASP-175 AND HIS-177</scope>
</reference>
<evidence type="ECO:0000250" key="1">
    <source>
        <dbReference type="UniProtKB" id="Q6NVU6"/>
    </source>
</evidence>
<evidence type="ECO:0000269" key="2">
    <source>
    </source>
</evidence>
<evidence type="ECO:0000269" key="3">
    <source>
    </source>
</evidence>
<evidence type="ECO:0000303" key="4">
    <source>
    </source>
</evidence>
<evidence type="ECO:0000305" key="5"/>
<evidence type="ECO:0000312" key="6">
    <source>
        <dbReference type="MGI" id="MGI:1917490"/>
    </source>
</evidence>
<evidence type="ECO:0007829" key="7">
    <source>
        <dbReference type="PDB" id="2Z84"/>
    </source>
</evidence>
<organism>
    <name type="scientific">Mus musculus</name>
    <name type="common">Mouse</name>
    <dbReference type="NCBI Taxonomy" id="10090"/>
    <lineage>
        <taxon>Eukaryota</taxon>
        <taxon>Metazoa</taxon>
        <taxon>Chordata</taxon>
        <taxon>Craniata</taxon>
        <taxon>Vertebrata</taxon>
        <taxon>Euteleostomi</taxon>
        <taxon>Mammalia</taxon>
        <taxon>Eutheria</taxon>
        <taxon>Euarchontoglires</taxon>
        <taxon>Glires</taxon>
        <taxon>Rodentia</taxon>
        <taxon>Myomorpha</taxon>
        <taxon>Muroidea</taxon>
        <taxon>Muridae</taxon>
        <taxon>Murinae</taxon>
        <taxon>Mus</taxon>
        <taxon>Mus</taxon>
    </lineage>
</organism>
<comment type="function">
    <text evidence="1 2 3">Thiol-dependent isopeptidase that specifically mediate the processing of UFM1 precursors as well as the deconjugation of UFM1 from target proteins (PubMed:17182609, PubMed:18321862). Mainly responsible for the maturation of the UFM1 precursor, a prerequisite for conjugation reactions (By similarity).</text>
</comment>
<comment type="subcellular location">
    <subcellularLocation>
        <location evidence="1">Cytoplasm</location>
        <location evidence="1">Cytosol</location>
    </subcellularLocation>
</comment>
<comment type="tissue specificity">
    <text evidence="2">Widely expressed. Expressed at higher level in brain, heart, kidney and skeletal muscle.</text>
</comment>
<comment type="similarity">
    <text evidence="5">Belongs to the peptidase C78 family.</text>
</comment>
<keyword id="KW-0002">3D-structure</keyword>
<keyword id="KW-0963">Cytoplasm</keyword>
<keyword id="KW-0378">Hydrolase</keyword>
<keyword id="KW-0645">Protease</keyword>
<keyword id="KW-1185">Reference proteome</keyword>
<keyword id="KW-0788">Thiol protease</keyword>
<keyword id="KW-0833">Ubl conjugation pathway</keyword>
<gene>
    <name evidence="4 6" type="primary">Ufsp1</name>
    <name type="synonym">D5Ertd655e</name>
</gene>
<proteinExistence type="evidence at protein level"/>
<accession>Q9CZP0</accession>
<name>UFSP1_MOUSE</name>
<protein>
    <recommendedName>
        <fullName evidence="5">Ufm1-specific protease 1</fullName>
        <shortName evidence="4">UfSP1</shortName>
        <ecNumber evidence="2 3">3.4.22.-</ecNumber>
    </recommendedName>
</protein>
<feature type="chain" id="PRO_0000280361" description="Ufm1-specific protease 1">
    <location>
        <begin position="1"/>
        <end position="217"/>
    </location>
</feature>
<feature type="active site" evidence="3">
    <location>
        <position position="53"/>
    </location>
</feature>
<feature type="active site" evidence="3">
    <location>
        <position position="175"/>
    </location>
</feature>
<feature type="active site" evidence="3">
    <location>
        <position position="177"/>
    </location>
</feature>
<feature type="mutagenesis site" description="Abolished isopeptidase activity." evidence="3">
    <original>Y</original>
    <variation>A</variation>
    <location>
        <position position="41"/>
    </location>
</feature>
<feature type="mutagenesis site" description="Abolished isopeptidase activity." evidence="2 3">
    <original>C</original>
    <variation>S</variation>
    <location>
        <position position="53"/>
    </location>
</feature>
<feature type="mutagenesis site" description="Does not affect isopeptidase activity." evidence="3">
    <original>W</original>
    <variation>A</variation>
    <location>
        <position position="98"/>
    </location>
</feature>
<feature type="mutagenesis site" description="Does not affect isopeptidase activity." evidence="3">
    <original>Q</original>
    <variation>A</variation>
    <location>
        <position position="154"/>
    </location>
</feature>
<feature type="mutagenesis site" description="Abolished isopeptidase activity." evidence="3">
    <original>D</original>
    <variation>A</variation>
    <location>
        <position position="175"/>
    </location>
</feature>
<feature type="mutagenesis site" description="Abolished isopeptidase activity." evidence="3">
    <original>H</original>
    <variation>A</variation>
    <location>
        <position position="177"/>
    </location>
</feature>
<feature type="turn" evidence="7">
    <location>
        <begin position="15"/>
        <end position="18"/>
    </location>
</feature>
<feature type="strand" evidence="7">
    <location>
        <begin position="22"/>
        <end position="25"/>
    </location>
</feature>
<feature type="strand" evidence="7">
    <location>
        <begin position="27"/>
        <end position="31"/>
    </location>
</feature>
<feature type="turn" evidence="7">
    <location>
        <begin position="41"/>
        <end position="44"/>
    </location>
</feature>
<feature type="turn" evidence="7">
    <location>
        <begin position="49"/>
        <end position="51"/>
    </location>
</feature>
<feature type="helix" evidence="7">
    <location>
        <begin position="53"/>
        <end position="62"/>
    </location>
</feature>
<feature type="turn" evidence="7">
    <location>
        <begin position="63"/>
        <end position="65"/>
    </location>
</feature>
<feature type="helix" evidence="7">
    <location>
        <begin position="75"/>
        <end position="84"/>
    </location>
</feature>
<feature type="helix" evidence="7">
    <location>
        <begin position="101"/>
        <end position="110"/>
    </location>
</feature>
<feature type="strand" evidence="7">
    <location>
        <begin position="114"/>
        <end position="121"/>
    </location>
</feature>
<feature type="turn" evidence="7">
    <location>
        <begin position="126"/>
        <end position="129"/>
    </location>
</feature>
<feature type="helix" evidence="7">
    <location>
        <begin position="131"/>
        <end position="139"/>
    </location>
</feature>
<feature type="strand" evidence="7">
    <location>
        <begin position="145"/>
        <end position="147"/>
    </location>
</feature>
<feature type="turn" evidence="7">
    <location>
        <begin position="150"/>
        <end position="152"/>
    </location>
</feature>
<feature type="strand" evidence="7">
    <location>
        <begin position="156"/>
        <end position="163"/>
    </location>
</feature>
<feature type="strand" evidence="7">
    <location>
        <begin position="169"/>
        <end position="174"/>
    </location>
</feature>
<feature type="helix" evidence="7">
    <location>
        <begin position="185"/>
        <end position="190"/>
    </location>
</feature>
<feature type="strand" evidence="7">
    <location>
        <begin position="193"/>
        <end position="198"/>
    </location>
</feature>
<feature type="helix" evidence="7">
    <location>
        <begin position="199"/>
        <end position="202"/>
    </location>
</feature>
<feature type="strand" evidence="7">
    <location>
        <begin position="209"/>
        <end position="215"/>
    </location>
</feature>
<sequence length="217" mass="23421">MTAALPSTLELLKDVHLGLPVPCHDPARLALLSGHYLYYHYGCDGLDDRGWGCGYRTLQTLCSWPGGQSSGVPGLPALQGALEAMGDKPPGFRGSRNWIGCVEASLCLEHFGGPQGRLCHLPRGVGLRGEEERLYSHFTTGGGPVMVGGDADAQSKALLGICEGPGSEVYVLILDPHYWGTPKNRCELQAAGWVGWQKVKSVFDSNSFYNLCFTRNL</sequence>
<dbReference type="EC" id="3.4.22.-" evidence="2 3"/>
<dbReference type="EMBL" id="AF312033">
    <property type="protein sequence ID" value="AAK28831.1"/>
    <property type="molecule type" value="Genomic_DNA"/>
</dbReference>
<dbReference type="EMBL" id="AK012343">
    <property type="protein sequence ID" value="BAB28174.1"/>
    <property type="molecule type" value="mRNA"/>
</dbReference>
<dbReference type="EMBL" id="BC016577">
    <property type="protein sequence ID" value="AAH16577.1"/>
    <property type="molecule type" value="mRNA"/>
</dbReference>
<dbReference type="EMBL" id="BC087958">
    <property type="protein sequence ID" value="AAH87958.1"/>
    <property type="molecule type" value="mRNA"/>
</dbReference>
<dbReference type="RefSeq" id="NP_081632.1">
    <property type="nucleotide sequence ID" value="NM_027356.2"/>
</dbReference>
<dbReference type="PDB" id="2Z84">
    <property type="method" value="X-ray"/>
    <property type="resolution" value="1.70 A"/>
    <property type="chains" value="A=6-215"/>
</dbReference>
<dbReference type="PDBsum" id="2Z84"/>
<dbReference type="SMR" id="Q9CZP0"/>
<dbReference type="BioGRID" id="213935">
    <property type="interactions" value="2"/>
</dbReference>
<dbReference type="FunCoup" id="Q9CZP0">
    <property type="interactions" value="32"/>
</dbReference>
<dbReference type="STRING" id="10090.ENSMUSP00000056156"/>
<dbReference type="MEROPS" id="C78.001"/>
<dbReference type="PhosphoSitePlus" id="Q9CZP0"/>
<dbReference type="PaxDb" id="10090-ENSMUSP00000056156"/>
<dbReference type="PeptideAtlas" id="Q9CZP0"/>
<dbReference type="ProteomicsDB" id="299639"/>
<dbReference type="Pumba" id="Q9CZP0"/>
<dbReference type="Antibodypedia" id="16700">
    <property type="antibodies" value="25 antibodies from 13 providers"/>
</dbReference>
<dbReference type="Ensembl" id="ENSMUST00000052825.7">
    <property type="protein sequence ID" value="ENSMUSP00000056156.6"/>
    <property type="gene ID" value="ENSMUSG00000051502.8"/>
</dbReference>
<dbReference type="GeneID" id="70240"/>
<dbReference type="KEGG" id="mmu:70240"/>
<dbReference type="UCSC" id="uc009abz.1">
    <property type="organism name" value="mouse"/>
</dbReference>
<dbReference type="AGR" id="MGI:1917490"/>
<dbReference type="CTD" id="402682"/>
<dbReference type="MGI" id="MGI:1917490">
    <property type="gene designation" value="Ufsp1"/>
</dbReference>
<dbReference type="VEuPathDB" id="HostDB:ENSMUSG00000051502"/>
<dbReference type="eggNOG" id="KOG2433">
    <property type="taxonomic scope" value="Eukaryota"/>
</dbReference>
<dbReference type="GeneTree" id="ENSGT00940000162936"/>
<dbReference type="HOGENOM" id="CLU_114366_0_0_1"/>
<dbReference type="InParanoid" id="Q9CZP0"/>
<dbReference type="OMA" id="AISWIIN"/>
<dbReference type="OrthoDB" id="417506at2759"/>
<dbReference type="PhylomeDB" id="Q9CZP0"/>
<dbReference type="TreeFam" id="TF325896"/>
<dbReference type="BioGRID-ORCS" id="70240">
    <property type="hits" value="3 hits in 79 CRISPR screens"/>
</dbReference>
<dbReference type="EvolutionaryTrace" id="Q9CZP0"/>
<dbReference type="PRO" id="PR:Q9CZP0"/>
<dbReference type="Proteomes" id="UP000000589">
    <property type="component" value="Chromosome 5"/>
</dbReference>
<dbReference type="RNAct" id="Q9CZP0">
    <property type="molecule type" value="protein"/>
</dbReference>
<dbReference type="Bgee" id="ENSMUSG00000051502">
    <property type="expression patterns" value="Expressed in bone marrow and 103 other cell types or tissues"/>
</dbReference>
<dbReference type="ExpressionAtlas" id="Q9CZP0">
    <property type="expression patterns" value="baseline and differential"/>
</dbReference>
<dbReference type="GO" id="GO:0005829">
    <property type="term" value="C:cytosol"/>
    <property type="evidence" value="ECO:0000250"/>
    <property type="project" value="UniProtKB"/>
</dbReference>
<dbReference type="GO" id="GO:0071567">
    <property type="term" value="F:deUFMylase activity"/>
    <property type="evidence" value="ECO:0000314"/>
    <property type="project" value="UniProtKB"/>
</dbReference>
<dbReference type="GO" id="GO:0051604">
    <property type="term" value="P:protein maturation"/>
    <property type="evidence" value="ECO:0000250"/>
    <property type="project" value="UniProtKB"/>
</dbReference>
<dbReference type="GO" id="GO:0006508">
    <property type="term" value="P:proteolysis"/>
    <property type="evidence" value="ECO:0007669"/>
    <property type="project" value="UniProtKB-KW"/>
</dbReference>
<dbReference type="Gene3D" id="3.90.70.130">
    <property type="match status" value="1"/>
</dbReference>
<dbReference type="InterPro" id="IPR012462">
    <property type="entry name" value="UfSP1/2_DUB_cat"/>
</dbReference>
<dbReference type="PANTHER" id="PTHR48153:SF3">
    <property type="entry name" value="INACTIVE UFM1-SPECIFIC PROTEASE 1"/>
    <property type="match status" value="1"/>
</dbReference>
<dbReference type="PANTHER" id="PTHR48153">
    <property type="entry name" value="UFM1-SPECIFIC PROTEASE 2"/>
    <property type="match status" value="1"/>
</dbReference>
<dbReference type="Pfam" id="PF07910">
    <property type="entry name" value="Peptidase_C78"/>
    <property type="match status" value="1"/>
</dbReference>